<gene>
    <name evidence="7" type="primary">7OMT</name>
    <name evidence="6" type="synonym">PSOMT1</name>
</gene>
<dbReference type="EC" id="2.1.1.291" evidence="2"/>
<dbReference type="EMBL" id="AY268893">
    <property type="protein sequence ID" value="AAQ01668.1"/>
    <property type="molecule type" value="mRNA"/>
</dbReference>
<dbReference type="SMR" id="Q6WUC2"/>
<dbReference type="KEGG" id="ag:AAQ01668"/>
<dbReference type="OrthoDB" id="1606438at2759"/>
<dbReference type="BRENDA" id="2.1.1.291">
    <property type="organism ID" value="4515"/>
</dbReference>
<dbReference type="SABIO-RK" id="Q6WUC2"/>
<dbReference type="GO" id="GO:0102917">
    <property type="term" value="F:(R,S)-reticuline 7-O-methyltransferase activity"/>
    <property type="evidence" value="ECO:0007669"/>
    <property type="project" value="UniProtKB-EC"/>
</dbReference>
<dbReference type="GO" id="GO:0042802">
    <property type="term" value="F:identical protein binding"/>
    <property type="evidence" value="ECO:0000314"/>
    <property type="project" value="UniProtKB"/>
</dbReference>
<dbReference type="GO" id="GO:0008171">
    <property type="term" value="F:O-methyltransferase activity"/>
    <property type="evidence" value="ECO:0000314"/>
    <property type="project" value="UniProtKB"/>
</dbReference>
<dbReference type="GO" id="GO:0046983">
    <property type="term" value="F:protein dimerization activity"/>
    <property type="evidence" value="ECO:0007669"/>
    <property type="project" value="InterPro"/>
</dbReference>
<dbReference type="GO" id="GO:0009821">
    <property type="term" value="P:alkaloid biosynthetic process"/>
    <property type="evidence" value="ECO:0000314"/>
    <property type="project" value="UniProtKB"/>
</dbReference>
<dbReference type="GO" id="GO:0032259">
    <property type="term" value="P:methylation"/>
    <property type="evidence" value="ECO:0007669"/>
    <property type="project" value="UniProtKB-KW"/>
</dbReference>
<dbReference type="CDD" id="cd02440">
    <property type="entry name" value="AdoMet_MTases"/>
    <property type="match status" value="1"/>
</dbReference>
<dbReference type="FunFam" id="1.10.10.10:FF:000213">
    <property type="entry name" value="Coniferyl alcohol 9-O-methyltransferase"/>
    <property type="match status" value="1"/>
</dbReference>
<dbReference type="FunFam" id="3.40.50.150:FF:000294">
    <property type="entry name" value="O-methyltransferase family protein"/>
    <property type="match status" value="1"/>
</dbReference>
<dbReference type="Gene3D" id="3.40.50.150">
    <property type="entry name" value="Vaccinia Virus protein VP39"/>
    <property type="match status" value="1"/>
</dbReference>
<dbReference type="Gene3D" id="1.10.10.10">
    <property type="entry name" value="Winged helix-like DNA-binding domain superfamily/Winged helix DNA-binding domain"/>
    <property type="match status" value="1"/>
</dbReference>
<dbReference type="InterPro" id="IPR016461">
    <property type="entry name" value="COMT-like"/>
</dbReference>
<dbReference type="InterPro" id="IPR001077">
    <property type="entry name" value="O_MeTrfase_dom"/>
</dbReference>
<dbReference type="InterPro" id="IPR012967">
    <property type="entry name" value="Plant_O-MeTrfase_dimerisation"/>
</dbReference>
<dbReference type="InterPro" id="IPR029063">
    <property type="entry name" value="SAM-dependent_MTases_sf"/>
</dbReference>
<dbReference type="InterPro" id="IPR036388">
    <property type="entry name" value="WH-like_DNA-bd_sf"/>
</dbReference>
<dbReference type="InterPro" id="IPR036390">
    <property type="entry name" value="WH_DNA-bd_sf"/>
</dbReference>
<dbReference type="PANTHER" id="PTHR11746">
    <property type="entry name" value="O-METHYLTRANSFERASE"/>
    <property type="match status" value="1"/>
</dbReference>
<dbReference type="Pfam" id="PF08100">
    <property type="entry name" value="Dimerisation"/>
    <property type="match status" value="1"/>
</dbReference>
<dbReference type="Pfam" id="PF00891">
    <property type="entry name" value="Methyltransf_2"/>
    <property type="match status" value="1"/>
</dbReference>
<dbReference type="PIRSF" id="PIRSF005739">
    <property type="entry name" value="O-mtase"/>
    <property type="match status" value="1"/>
</dbReference>
<dbReference type="SUPFAM" id="SSF53335">
    <property type="entry name" value="S-adenosyl-L-methionine-dependent methyltransferases"/>
    <property type="match status" value="1"/>
</dbReference>
<dbReference type="SUPFAM" id="SSF46785">
    <property type="entry name" value="Winged helix' DNA-binding domain"/>
    <property type="match status" value="1"/>
</dbReference>
<dbReference type="PROSITE" id="PS51683">
    <property type="entry name" value="SAM_OMT_II"/>
    <property type="match status" value="1"/>
</dbReference>
<protein>
    <recommendedName>
        <fullName evidence="6">(R,S)-reticuline 7-O-methyltransferase</fullName>
        <shortName evidence="6">7OMT</shortName>
        <ecNumber evidence="2">2.1.1.291</ecNumber>
    </recommendedName>
</protein>
<sequence>MDTAEERLKGQAEIWEHMFAFVDSMALKCAVELGIPDIINSHGRPVTISEIVDSLKTNTPSSSPNIDYLTRIMRLLVHKRLFTSELHQESNQLLYNLTRSSKWLLKDSKFNLSPLVLWETNPILLKPWQYLGKCAQEKSSPFERAHGCEIWDLALADPKFNNFLNGAMQCSTTTIINEMLLEYKDGFSGIAGSLVDVGGGTGSIIAEIVKAHPHIQGINFDLPHVVATAAEFPGVKHVGGDMFVDIPEADAVIMKWILHDWSDEDCTIILKNCYRAIRKKKNGKVIIVDCVLRPDGNDLFDKMGLIFDVLMMAHTTAGKERTEAEWKILLNNAGFPRYNVIRTPAFPCIIEAFPE</sequence>
<reference key="1">
    <citation type="journal article" date="2003" name="Plant J.">
        <title>(R,S)-Reticuline 7-O-methyltransferase and (R,S)-norcoclaurine 6-O-methyltransferase of Papaver somniferum - cDNA cloning and characterization of methyl transfer enzymes of alkaloid biosynthesis in opium poppy.</title>
        <authorList>
            <person name="Ounaroon A."/>
            <person name="Decker G."/>
            <person name="Schmidt J."/>
            <person name="Lottspeich F."/>
            <person name="Kutchan T.M."/>
        </authorList>
    </citation>
    <scope>NUCLEOTIDE SEQUENCE [MRNA]</scope>
    <scope>PROTEIN SEQUENCE OF 185-199; 238-252; 285-299; 321-325 AND 328-352</scope>
    <scope>TISSUE SPECIFICITY</scope>
    <scope>SUBUNIT</scope>
    <scope>FUNCTION</scope>
    <scope>CATALYTIC ACTIVITY</scope>
    <scope>BIOPHYSICOCHEMICAL PROPERTIES</scope>
</reference>
<reference key="2">
    <citation type="journal article" date="2004" name="Proc. Natl. Acad. Sci. U.S.A.">
        <title>The roles of latex and the vascular bundle in morphine biosynthesis in the opium poppy, Papaver somniferum.</title>
        <authorList>
            <person name="Weid M."/>
            <person name="Ziegler J."/>
            <person name="Kutchan T.M."/>
        </authorList>
    </citation>
    <scope>FUNCTION</scope>
    <scope>TISSUE SPECIFICITY</scope>
</reference>
<reference key="3">
    <citation type="journal article" date="2012" name="Plant J.">
        <title>Systematic silencing of benzylisoquinoline alkaloid biosynthetic genes reveals the major route to papaverine in opium poppy.</title>
        <authorList>
            <person name="Desgagne-Penix I."/>
            <person name="Facchini P.J."/>
        </authorList>
    </citation>
    <scope>FUNCTION</scope>
</reference>
<reference key="4">
    <citation type="journal article" date="2013" name="PLoS ONE">
        <title>Comparative transcriptome analysis using high papaverine mutant of Papaver somniferum reveals pathway and uncharacterized steps of papaverine biosynthesis.</title>
        <authorList>
            <person name="Pathak S."/>
            <person name="Lakhwani D."/>
            <person name="Gupta P."/>
            <person name="Mishra B.K."/>
            <person name="Shukla S."/>
            <person name="Asif M.H."/>
            <person name="Trivedi P.K."/>
        </authorList>
    </citation>
    <scope>FUNCTION</scope>
</reference>
<organism>
    <name type="scientific">Papaver somniferum</name>
    <name type="common">Opium poppy</name>
    <dbReference type="NCBI Taxonomy" id="3469"/>
    <lineage>
        <taxon>Eukaryota</taxon>
        <taxon>Viridiplantae</taxon>
        <taxon>Streptophyta</taxon>
        <taxon>Embryophyta</taxon>
        <taxon>Tracheophyta</taxon>
        <taxon>Spermatophyta</taxon>
        <taxon>Magnoliopsida</taxon>
        <taxon>Ranunculales</taxon>
        <taxon>Papaveraceae</taxon>
        <taxon>Papaveroideae</taxon>
        <taxon>Papaver</taxon>
    </lineage>
</organism>
<accession>Q6WUC2</accession>
<name>7OMT_PAPSO</name>
<proteinExistence type="evidence at protein level"/>
<keyword id="KW-0017">Alkaloid metabolism</keyword>
<keyword id="KW-0903">Direct protein sequencing</keyword>
<keyword id="KW-0489">Methyltransferase</keyword>
<keyword id="KW-0949">S-adenosyl-L-methionine</keyword>
<keyword id="KW-0808">Transferase</keyword>
<feature type="chain" id="PRO_0000428642" description="(R,S)-reticuline 7-O-methyltransferase">
    <location>
        <begin position="1"/>
        <end position="355"/>
    </location>
</feature>
<feature type="active site" description="Proton acceptor" evidence="1">
    <location>
        <position position="259"/>
    </location>
</feature>
<feature type="binding site" evidence="1">
    <location>
        <begin position="197"/>
        <end position="200"/>
    </location>
    <ligand>
        <name>S-adenosyl-L-methionine</name>
        <dbReference type="ChEBI" id="CHEBI:59789"/>
    </ligand>
</feature>
<feature type="binding site" evidence="1">
    <location>
        <begin position="221"/>
        <end position="222"/>
    </location>
    <ligand>
        <name>S-adenosyl-L-methionine</name>
        <dbReference type="ChEBI" id="CHEBI:59789"/>
    </ligand>
</feature>
<feature type="binding site" evidence="1">
    <location>
        <position position="221"/>
    </location>
    <ligand>
        <name>S-adenosyl-L-methionine</name>
        <dbReference type="ChEBI" id="CHEBI:59789"/>
    </ligand>
</feature>
<feature type="binding site" evidence="1">
    <location>
        <begin position="241"/>
        <end position="242"/>
    </location>
    <ligand>
        <name>S-adenosyl-L-methionine</name>
        <dbReference type="ChEBI" id="CHEBI:59789"/>
    </ligand>
</feature>
<feature type="binding site" evidence="1">
    <location>
        <position position="255"/>
    </location>
    <ligand>
        <name>S-adenosyl-L-methionine</name>
        <dbReference type="ChEBI" id="CHEBI:59789"/>
    </ligand>
</feature>
<comment type="function">
    <text evidence="2 3 4 5">Catalyzes the transfer of a methyl group to reticuline to form laudanine. Methylates the simple catechols guaiacol and isovanillic acid as well as the tetrahydrobenzylisoquinolines (R)-reticuline, (S)-reticuline, (R,S)-orientaline, (R)-protosinomenine and (R,S)-isoorientaline. Involved in the production of laudanine.</text>
</comment>
<comment type="catalytic activity">
    <reaction evidence="2">
        <text>(S)-reticuline + S-adenosyl-L-methionine = (S)-laudanine + S-adenosyl-L-homocysteine + H(+)</text>
        <dbReference type="Rhea" id="RHEA:10444"/>
        <dbReference type="ChEBI" id="CHEBI:15378"/>
        <dbReference type="ChEBI" id="CHEBI:57856"/>
        <dbReference type="ChEBI" id="CHEBI:57873"/>
        <dbReference type="ChEBI" id="CHEBI:59789"/>
        <dbReference type="ChEBI" id="CHEBI:75999"/>
        <dbReference type="EC" id="2.1.1.291"/>
    </reaction>
</comment>
<comment type="catalytic activity">
    <reaction evidence="2">
        <text>(R)-reticuline + S-adenosyl-L-methionine = (R)-laudanine + S-adenosyl-L-homocysteine + H(+)</text>
        <dbReference type="Rhea" id="RHEA:38907"/>
        <dbReference type="ChEBI" id="CHEBI:15378"/>
        <dbReference type="ChEBI" id="CHEBI:57856"/>
        <dbReference type="ChEBI" id="CHEBI:58144"/>
        <dbReference type="ChEBI" id="CHEBI:59789"/>
        <dbReference type="ChEBI" id="CHEBI:76001"/>
        <dbReference type="EC" id="2.1.1.291"/>
    </reaction>
</comment>
<comment type="biophysicochemical properties">
    <kinetics>
        <KM evidence="2">17 uM for guaiacol</KM>
        <KM evidence="2">16 uM for (S)-reticuline</KM>
        <KM evidence="2">17 uM for (R)-reticuline</KM>
        <KM evidence="2">16 uM for (R)-protosinomenine</KM>
        <KM evidence="2">17 uM for (R,S)-isoorientaline</KM>
        <KM evidence="2">14 uM for isovanillic acid</KM>
        <KM evidence="2">310 uM for S-adenosyl-L-methionine with guaiacol as substrate</KM>
        <KM evidence="2">360 uM for S-adenosyl-L-methionine with (S)-reticuline as substrate</KM>
        <KM evidence="2">310 uM for S-adenosyl-L-methionine with (R)-reticuline as substrate</KM>
        <KM evidence="2">320 uM for S-adenosyl-L-methionine with (R)-protosinomenine as substrate</KM>
        <KM evidence="2">260 uM for S-adenosyl-L-methionine with (R,S)-isoorientaline as substrate</KM>
        <KM evidence="2">150 uM for S-adenosyl-L-methionine with isovanillic acid as substrate</KM>
        <text>kcat is 0.1 sec(-1) with guaiacol as substrate. kcat is 0.07 sec(-1) with (S)-reticuline as substrate. kcat is 0.07 sec(-1) with (R)-reticuline as substrate. kcat is 0.03 sec(-1) with (R)-protosinomenine as substrate. kcat is 0.02 sec(-1) with (R,S)-isoorientaline as substrate. kcat is 0.02 sec(-1) with isovanillic acid as substrate.</text>
    </kinetics>
    <phDependence>
        <text evidence="2">Optimum pH is 8.0.</text>
    </phDependence>
    <temperatureDependence>
        <text evidence="2">Optimum temperature is 37 degrees Celsius.</text>
    </temperatureDependence>
</comment>
<comment type="subunit">
    <text evidence="2">Homodimer.</text>
</comment>
<comment type="tissue specificity">
    <text evidence="2 3">Expressed in capsules, buds and stems, and at lower levels in leaves. Localized to parenchyma cells within the vascular bundle, but only to those cells distal to laticifers. In roots, found in the pericycle within the stele.</text>
</comment>
<comment type="similarity">
    <text evidence="8">Belongs to the class I-like SAM-binding methyltransferase superfamily. Cation-independent O-methyltransferase family.</text>
</comment>
<evidence type="ECO:0000255" key="1">
    <source>
        <dbReference type="PROSITE-ProRule" id="PRU01020"/>
    </source>
</evidence>
<evidence type="ECO:0000269" key="2">
    <source>
    </source>
</evidence>
<evidence type="ECO:0000269" key="3">
    <source>
    </source>
</evidence>
<evidence type="ECO:0000269" key="4">
    <source>
    </source>
</evidence>
<evidence type="ECO:0000269" key="5">
    <source>
    </source>
</evidence>
<evidence type="ECO:0000303" key="6">
    <source>
    </source>
</evidence>
<evidence type="ECO:0000303" key="7">
    <source>
    </source>
</evidence>
<evidence type="ECO:0000305" key="8"/>